<dbReference type="EMBL" id="AE006468">
    <property type="protein sequence ID" value="AAL22302.1"/>
    <property type="molecule type" value="Genomic_DNA"/>
</dbReference>
<dbReference type="RefSeq" id="NP_462343.1">
    <property type="nucleotide sequence ID" value="NC_003197.2"/>
</dbReference>
<dbReference type="RefSeq" id="WP_000424395.1">
    <property type="nucleotide sequence ID" value="NC_003197.2"/>
</dbReference>
<dbReference type="SMR" id="P60726"/>
<dbReference type="STRING" id="99287.STM3439"/>
<dbReference type="PaxDb" id="99287-STM3439"/>
<dbReference type="GeneID" id="1254962"/>
<dbReference type="GeneID" id="97442859"/>
<dbReference type="KEGG" id="stm:STM3439"/>
<dbReference type="PATRIC" id="fig|99287.12.peg.3636"/>
<dbReference type="HOGENOM" id="CLU_041575_5_2_6"/>
<dbReference type="OMA" id="PQVHILE"/>
<dbReference type="PhylomeDB" id="P60726"/>
<dbReference type="BioCyc" id="SENT99287:STM3439-MONOMER"/>
<dbReference type="PRO" id="PR:P60726"/>
<dbReference type="Proteomes" id="UP000001014">
    <property type="component" value="Chromosome"/>
</dbReference>
<dbReference type="GO" id="GO:1990904">
    <property type="term" value="C:ribonucleoprotein complex"/>
    <property type="evidence" value="ECO:0007669"/>
    <property type="project" value="UniProtKB-KW"/>
</dbReference>
<dbReference type="GO" id="GO:0005840">
    <property type="term" value="C:ribosome"/>
    <property type="evidence" value="ECO:0007669"/>
    <property type="project" value="UniProtKB-KW"/>
</dbReference>
<dbReference type="GO" id="GO:0019843">
    <property type="term" value="F:rRNA binding"/>
    <property type="evidence" value="ECO:0007669"/>
    <property type="project" value="UniProtKB-UniRule"/>
</dbReference>
<dbReference type="GO" id="GO:0003735">
    <property type="term" value="F:structural constituent of ribosome"/>
    <property type="evidence" value="ECO:0000318"/>
    <property type="project" value="GO_Central"/>
</dbReference>
<dbReference type="GO" id="GO:0006353">
    <property type="term" value="P:DNA-templated transcription termination"/>
    <property type="evidence" value="ECO:0007669"/>
    <property type="project" value="UniProtKB-KW"/>
</dbReference>
<dbReference type="GO" id="GO:0006417">
    <property type="term" value="P:regulation of translation"/>
    <property type="evidence" value="ECO:0007669"/>
    <property type="project" value="UniProtKB-KW"/>
</dbReference>
<dbReference type="GO" id="GO:0006412">
    <property type="term" value="P:translation"/>
    <property type="evidence" value="ECO:0007669"/>
    <property type="project" value="UniProtKB-UniRule"/>
</dbReference>
<dbReference type="FunFam" id="3.40.1370.10:FF:000001">
    <property type="entry name" value="50S ribosomal protein L4"/>
    <property type="match status" value="1"/>
</dbReference>
<dbReference type="Gene3D" id="3.40.1370.10">
    <property type="match status" value="1"/>
</dbReference>
<dbReference type="HAMAP" id="MF_01328_B">
    <property type="entry name" value="Ribosomal_uL4_B"/>
    <property type="match status" value="1"/>
</dbReference>
<dbReference type="InterPro" id="IPR002136">
    <property type="entry name" value="Ribosomal_uL4"/>
</dbReference>
<dbReference type="InterPro" id="IPR013005">
    <property type="entry name" value="Ribosomal_uL4-like"/>
</dbReference>
<dbReference type="InterPro" id="IPR023574">
    <property type="entry name" value="Ribosomal_uL4_dom_sf"/>
</dbReference>
<dbReference type="NCBIfam" id="TIGR03953">
    <property type="entry name" value="rplD_bact"/>
    <property type="match status" value="1"/>
</dbReference>
<dbReference type="PANTHER" id="PTHR10746">
    <property type="entry name" value="50S RIBOSOMAL PROTEIN L4"/>
    <property type="match status" value="1"/>
</dbReference>
<dbReference type="PANTHER" id="PTHR10746:SF6">
    <property type="entry name" value="LARGE RIBOSOMAL SUBUNIT PROTEIN UL4M"/>
    <property type="match status" value="1"/>
</dbReference>
<dbReference type="Pfam" id="PF00573">
    <property type="entry name" value="Ribosomal_L4"/>
    <property type="match status" value="1"/>
</dbReference>
<dbReference type="SUPFAM" id="SSF52166">
    <property type="entry name" value="Ribosomal protein L4"/>
    <property type="match status" value="1"/>
</dbReference>
<keyword id="KW-1185">Reference proteome</keyword>
<keyword id="KW-0678">Repressor</keyword>
<keyword id="KW-0687">Ribonucleoprotein</keyword>
<keyword id="KW-0689">Ribosomal protein</keyword>
<keyword id="KW-0694">RNA-binding</keyword>
<keyword id="KW-0699">rRNA-binding</keyword>
<keyword id="KW-0804">Transcription</keyword>
<keyword id="KW-0805">Transcription regulation</keyword>
<keyword id="KW-0806">Transcription termination</keyword>
<keyword id="KW-0810">Translation regulation</keyword>
<accession>P60726</accession>
<accession>P02388</accession>
<name>RL4_SALTY</name>
<evidence type="ECO:0000250" key="1"/>
<evidence type="ECO:0000256" key="2">
    <source>
        <dbReference type="SAM" id="MobiDB-lite"/>
    </source>
</evidence>
<evidence type="ECO:0000269" key="3">
    <source>
    </source>
</evidence>
<evidence type="ECO:0000305" key="4"/>
<protein>
    <recommendedName>
        <fullName evidence="4">Large ribosomal subunit protein uL4</fullName>
    </recommendedName>
    <alternativeName>
        <fullName>50S ribosomal protein L4</fullName>
    </alternativeName>
</protein>
<proteinExistence type="evidence at protein level"/>
<feature type="chain" id="PRO_0000129270" description="Large ribosomal subunit protein uL4">
    <location>
        <begin position="1"/>
        <end position="201"/>
    </location>
</feature>
<feature type="region of interest" description="Disordered" evidence="2">
    <location>
        <begin position="44"/>
        <end position="71"/>
    </location>
</feature>
<sequence length="201" mass="22087">MELVLKDAQSALTVSETTFGRDFNEALVHQVVVAYAAGARQGTRAQKTRAEVTGSGKKPWRQKGTGRARSGSIKSPIWRSGGVTFAARPQDHSQKVNKKMYRGALKSILSELVRQDRLIVVEKFSVEAPKTKLLAQKLKDMALEDVLIITGELDENLFLAARNLHKVDVRDATGIDPVSLIAFDKVVMTADAVKQVEEMLA</sequence>
<organism>
    <name type="scientific">Salmonella typhimurium (strain LT2 / SGSC1412 / ATCC 700720)</name>
    <dbReference type="NCBI Taxonomy" id="99287"/>
    <lineage>
        <taxon>Bacteria</taxon>
        <taxon>Pseudomonadati</taxon>
        <taxon>Pseudomonadota</taxon>
        <taxon>Gammaproteobacteria</taxon>
        <taxon>Enterobacterales</taxon>
        <taxon>Enterobacteriaceae</taxon>
        <taxon>Salmonella</taxon>
    </lineage>
</organism>
<comment type="function">
    <text evidence="1">One of the primary rRNA binding proteins, this protein initially binds near the 5'-end of the 23S rRNA. It is important during the early stages of 50S assembly. It makes multiple contacts with different domains of the 23S rRNA in the assembled 50S subunit and ribosome (By similarity).</text>
</comment>
<comment type="function">
    <text evidence="3">Protein L4 is a both a transcriptional repressor and a translational repressor protein. It regulates transcription of the S10 operon (to which L4 belongs) by causing premature termination of transcription within the S10 leader. L4 controls the translation of the S10 operon by binding to its mRNA.</text>
</comment>
<comment type="function">
    <text evidence="3">Forms part of the polypeptide exit tunnel.</text>
</comment>
<comment type="subunit">
    <text evidence="1">Part of the 50S ribosomal subunit.</text>
</comment>
<comment type="similarity">
    <text evidence="4">Belongs to the universal ribosomal protein uL4 family.</text>
</comment>
<gene>
    <name type="primary">rplD</name>
    <name type="ordered locus">STM3439</name>
</gene>
<reference key="1">
    <citation type="journal article" date="2001" name="Nature">
        <title>Complete genome sequence of Salmonella enterica serovar Typhimurium LT2.</title>
        <authorList>
            <person name="McClelland M."/>
            <person name="Sanderson K.E."/>
            <person name="Spieth J."/>
            <person name="Clifton S.W."/>
            <person name="Latreille P."/>
            <person name="Courtney L."/>
            <person name="Porwollik S."/>
            <person name="Ali J."/>
            <person name="Dante M."/>
            <person name="Du F."/>
            <person name="Hou S."/>
            <person name="Layman D."/>
            <person name="Leonard S."/>
            <person name="Nguyen C."/>
            <person name="Scott K."/>
            <person name="Holmes A."/>
            <person name="Grewal N."/>
            <person name="Mulvaney E."/>
            <person name="Ryan E."/>
            <person name="Sun H."/>
            <person name="Florea L."/>
            <person name="Miller W."/>
            <person name="Stoneking T."/>
            <person name="Nhan M."/>
            <person name="Waterston R."/>
            <person name="Wilson R.K."/>
        </authorList>
    </citation>
    <scope>NUCLEOTIDE SEQUENCE [LARGE SCALE GENOMIC DNA]</scope>
    <source>
        <strain>LT2 / SGSC1412 / ATCC 700720</strain>
    </source>
</reference>
<reference key="2">
    <citation type="journal article" date="1999" name="J. Bacteriol.">
        <title>Phylogenetic analysis of L4-mediated autogenous control of the S10 ribosomal protein operon.</title>
        <authorList>
            <person name="Allen T."/>
            <person name="Shen P."/>
            <person name="Samsel L."/>
            <person name="Liu R."/>
            <person name="Lindahl L."/>
            <person name="Zengel J.M."/>
        </authorList>
    </citation>
    <scope>FUNCTION IN TRANSCRIPTIONAL/TRANSLATIONAL REGULATION OF THE S10 RIBOSOMAL PROTEIN OPERON</scope>
    <source>
        <strain>LT2</strain>
    </source>
</reference>